<organism>
    <name type="scientific">Xenopus laevis</name>
    <name type="common">African clawed frog</name>
    <dbReference type="NCBI Taxonomy" id="8355"/>
    <lineage>
        <taxon>Eukaryota</taxon>
        <taxon>Metazoa</taxon>
        <taxon>Chordata</taxon>
        <taxon>Craniata</taxon>
        <taxon>Vertebrata</taxon>
        <taxon>Euteleostomi</taxon>
        <taxon>Amphibia</taxon>
        <taxon>Batrachia</taxon>
        <taxon>Anura</taxon>
        <taxon>Pipoidea</taxon>
        <taxon>Pipidae</taxon>
        <taxon>Xenopodinae</taxon>
        <taxon>Xenopus</taxon>
        <taxon>Xenopus</taxon>
    </lineage>
</organism>
<sequence length="186" mass="21129">MACGATLKRSMEFEALMSPQSPKRRRCAPLPGSPATPSPQRCAIRPEMQQGQQQPLSQLGGDRRLTPEQILQNIKQEYTRYQRRRQLEGAFNQCEAGALNEVQASCSSLTAPSSPGSLVKKDQPTFSLRQVGILCERLLKDHEDKIREEYEQILNIKLAEQYESFVKFTHDQIMRRYGARPASYVS</sequence>
<comment type="function">
    <text evidence="2">Molecular adapter that acts as a bridge between proteins, and which is involved skeletal muscle development. Functions as a signal transducer for MSTN during skeletal muscle regeneration and myogenesis.</text>
</comment>
<comment type="subcellular location">
    <subcellularLocation>
        <location evidence="3">Nucleus</location>
    </subcellularLocation>
</comment>
<comment type="similarity">
    <text evidence="5">Belongs to the akirin family.</text>
</comment>
<name>AKIRA_XENLA</name>
<evidence type="ECO:0000250" key="1">
    <source>
        <dbReference type="UniProtKB" id="Q53H80"/>
    </source>
</evidence>
<evidence type="ECO:0000250" key="2">
    <source>
        <dbReference type="UniProtKB" id="Q99LF1"/>
    </source>
</evidence>
<evidence type="ECO:0000250" key="3">
    <source>
        <dbReference type="UniProtKB" id="Q9H9L7"/>
    </source>
</evidence>
<evidence type="ECO:0000256" key="4">
    <source>
        <dbReference type="SAM" id="MobiDB-lite"/>
    </source>
</evidence>
<evidence type="ECO:0000305" key="5"/>
<gene>
    <name type="primary">akirin1-a</name>
</gene>
<dbReference type="EMBL" id="BC089268">
    <property type="protein sequence ID" value="AAH89268.1"/>
    <property type="molecule type" value="mRNA"/>
</dbReference>
<dbReference type="RefSeq" id="NP_001089245.1">
    <property type="nucleotide sequence ID" value="NM_001095776.1"/>
</dbReference>
<dbReference type="SMR" id="Q5FWN7"/>
<dbReference type="DNASU" id="734292"/>
<dbReference type="GeneID" id="734292"/>
<dbReference type="KEGG" id="xla:734292"/>
<dbReference type="AGR" id="Xenbase:XB-GENE-5820134"/>
<dbReference type="CTD" id="734292"/>
<dbReference type="Xenbase" id="XB-GENE-5820134">
    <property type="gene designation" value="akirin1.S"/>
</dbReference>
<dbReference type="OrthoDB" id="10039914at2759"/>
<dbReference type="Proteomes" id="UP000186698">
    <property type="component" value="Chromosome 2S"/>
</dbReference>
<dbReference type="Bgee" id="734292">
    <property type="expression patterns" value="Expressed in blastula and 19 other cell types or tissues"/>
</dbReference>
<dbReference type="GO" id="GO:0000785">
    <property type="term" value="C:chromatin"/>
    <property type="evidence" value="ECO:0000318"/>
    <property type="project" value="GO_Central"/>
</dbReference>
<dbReference type="GO" id="GO:0005634">
    <property type="term" value="C:nucleus"/>
    <property type="evidence" value="ECO:0000318"/>
    <property type="project" value="GO_Central"/>
</dbReference>
<dbReference type="GO" id="GO:0003712">
    <property type="term" value="F:transcription coregulator activity"/>
    <property type="evidence" value="ECO:0000318"/>
    <property type="project" value="GO_Central"/>
</dbReference>
<dbReference type="GO" id="GO:0014839">
    <property type="term" value="P:myoblast migration involved in skeletal muscle regeneration"/>
    <property type="evidence" value="ECO:0000318"/>
    <property type="project" value="GO_Central"/>
</dbReference>
<dbReference type="GO" id="GO:1902723">
    <property type="term" value="P:negative regulation of skeletal muscle satellite cell proliferation"/>
    <property type="evidence" value="ECO:0000318"/>
    <property type="project" value="GO_Central"/>
</dbReference>
<dbReference type="GO" id="GO:0010592">
    <property type="term" value="P:positive regulation of lamellipodium assembly"/>
    <property type="evidence" value="ECO:0000318"/>
    <property type="project" value="GO_Central"/>
</dbReference>
<dbReference type="GO" id="GO:0010759">
    <property type="term" value="P:positive regulation of macrophage chemotaxis"/>
    <property type="evidence" value="ECO:0000318"/>
    <property type="project" value="GO_Central"/>
</dbReference>
<dbReference type="GO" id="GO:0045663">
    <property type="term" value="P:positive regulation of myoblast differentiation"/>
    <property type="evidence" value="ECO:0000250"/>
    <property type="project" value="UniProtKB"/>
</dbReference>
<dbReference type="GO" id="GO:0045944">
    <property type="term" value="P:positive regulation of transcription by RNA polymerase II"/>
    <property type="evidence" value="ECO:0000250"/>
    <property type="project" value="UniProtKB"/>
</dbReference>
<dbReference type="CDD" id="cd22243">
    <property type="entry name" value="akirin-1"/>
    <property type="match status" value="1"/>
</dbReference>
<dbReference type="InterPro" id="IPR024132">
    <property type="entry name" value="Akirin"/>
</dbReference>
<dbReference type="PANTHER" id="PTHR13293:SF9">
    <property type="entry name" value="AKIRIN-1"/>
    <property type="match status" value="1"/>
</dbReference>
<dbReference type="PANTHER" id="PTHR13293">
    <property type="entry name" value="AKIRIN-RELATED"/>
    <property type="match status" value="1"/>
</dbReference>
<reference key="1">
    <citation type="submission" date="2005-01" db="EMBL/GenBank/DDBJ databases">
        <authorList>
            <consortium name="NIH - Xenopus Gene Collection (XGC) project"/>
        </authorList>
    </citation>
    <scope>NUCLEOTIDE SEQUENCE [LARGE SCALE MRNA]</scope>
    <source>
        <tissue>Egg</tissue>
    </source>
</reference>
<accession>Q5FWN7</accession>
<keyword id="KW-0539">Nucleus</keyword>
<keyword id="KW-1185">Reference proteome</keyword>
<protein>
    <recommendedName>
        <fullName>Akirin-1A</fullName>
    </recommendedName>
</protein>
<feature type="chain" id="PRO_0000274320" description="Akirin-1A">
    <location>
        <begin position="1"/>
        <end position="186"/>
    </location>
</feature>
<feature type="region of interest" description="Disordered" evidence="4">
    <location>
        <begin position="14"/>
        <end position="65"/>
    </location>
</feature>
<feature type="short sequence motif" description="SYVS motif" evidence="1">
    <location>
        <begin position="183"/>
        <end position="186"/>
    </location>
</feature>
<feature type="compositionally biased region" description="Low complexity" evidence="4">
    <location>
        <begin position="49"/>
        <end position="60"/>
    </location>
</feature>
<proteinExistence type="evidence at transcript level"/>